<evidence type="ECO:0000255" key="1">
    <source>
        <dbReference type="HAMAP-Rule" id="MF_01871"/>
    </source>
</evidence>
<proteinExistence type="inferred from homology"/>
<name>DABA_BACCR</name>
<feature type="chain" id="PRO_0000387241" description="Probable inorganic carbon transporter subunit DabA">
    <location>
        <begin position="1"/>
        <end position="854"/>
    </location>
</feature>
<feature type="binding site" evidence="1">
    <location>
        <position position="378"/>
    </location>
    <ligand>
        <name>Zn(2+)</name>
        <dbReference type="ChEBI" id="CHEBI:29105"/>
    </ligand>
</feature>
<feature type="binding site" evidence="1">
    <location>
        <position position="380"/>
    </location>
    <ligand>
        <name>Zn(2+)</name>
        <dbReference type="ChEBI" id="CHEBI:29105"/>
    </ligand>
</feature>
<feature type="binding site" evidence="1">
    <location>
        <position position="560"/>
    </location>
    <ligand>
        <name>Zn(2+)</name>
        <dbReference type="ChEBI" id="CHEBI:29105"/>
    </ligand>
</feature>
<feature type="binding site" evidence="1">
    <location>
        <position position="575"/>
    </location>
    <ligand>
        <name>Zn(2+)</name>
        <dbReference type="ChEBI" id="CHEBI:29105"/>
    </ligand>
</feature>
<comment type="function">
    <text evidence="1">Part of an energy-coupled inorganic carbon pump.</text>
</comment>
<comment type="cofactor">
    <cofactor evidence="1">
        <name>Zn(2+)</name>
        <dbReference type="ChEBI" id="CHEBI:29105"/>
    </cofactor>
</comment>
<comment type="subunit">
    <text evidence="1">Forms a complex with DabB.</text>
</comment>
<comment type="subcellular location">
    <subcellularLocation>
        <location evidence="1">Cell membrane</location>
        <topology evidence="1">Peripheral membrane protein</topology>
    </subcellularLocation>
</comment>
<comment type="similarity">
    <text evidence="1">Belongs to the inorganic carbon transporter (TC 9.A.2) DabA family.</text>
</comment>
<organism>
    <name type="scientific">Bacillus cereus (strain ATCC 14579 / DSM 31 / CCUG 7414 / JCM 2152 / NBRC 15305 / NCIMB 9373 / NCTC 2599 / NRRL B-3711)</name>
    <dbReference type="NCBI Taxonomy" id="226900"/>
    <lineage>
        <taxon>Bacteria</taxon>
        <taxon>Bacillati</taxon>
        <taxon>Bacillota</taxon>
        <taxon>Bacilli</taxon>
        <taxon>Bacillales</taxon>
        <taxon>Bacillaceae</taxon>
        <taxon>Bacillus</taxon>
        <taxon>Bacillus cereus group</taxon>
    </lineage>
</organism>
<sequence length="854" mass="96898">MQENNINDLVASASRVIAPLWPIFTFAAHHPWMGLEKQSFEQVANWLKEARNVDIYPSASMIHSAKAKGEIEESFLQMSLSRWLDSQSFHIPREKAERFCQAALKLEKLPSSLLSSPEVNKLAEEMNYINTASMQASVMQPISSLIESQNSENLSDVLNYHIIKWCKLYLDESGSNWTMPNREKGFYRAWQHLITFDPALSKNERKVLKNWPQDAEVALARALSELGISESNIQSYLEGHLLSLPGWAGMIRWRSQQSIQEQELLIEYLAVRISMELAIVKPYLPLKNQKVEKKVSIVPLIASWIYWGNISTREWLQMPAAEQSELLAFAYRFDENIRRKLWLEAWEQTHAEQLREKIASTQRATNDKKRVLAQLAFCIDVRSEPFRRHLEKLGPFETFGIAGFFGLPIATSELGSNNNHPSLPVILKPKHQIKELTNENELKSYEQRKRVGSSVRYTFKTMKQNVMTSMALPELSGPLLGLQMVTRSFVPRGVGGFIRKLRKTMLQKPDTTFSLNHVHDTKGEIPIGFTKEEKVNYVRQALKIVGLTEKFAPLVVMCGHSSQSTNNPYAAALECGACGGAAGGFNARVFATLCNLPEVREALFAEGIKIPKDTIFAAAEHKTTVDELEWIYVPELSETAQEAFDCIESIMPNVSQHANRERLTQLPNFKTKIKNASKEAHRFAEDWSEIRPEWGLARNASFIIGQRELTQDCDLEGRAFLHNYDWKQDESGDILANIIAGPGTVAQWINLQYYASTVAPHYYGSGNKTTQTVTAGLGVMQGNASDLLPGLPWQSVMQSDSETYHSPLRLLIVIQAPSQYIERLLNNDFTFREKVQNGWVRLASVDPKGHWKNW</sequence>
<reference key="1">
    <citation type="journal article" date="2003" name="Nature">
        <title>Genome sequence of Bacillus cereus and comparative analysis with Bacillus anthracis.</title>
        <authorList>
            <person name="Ivanova N."/>
            <person name="Sorokin A."/>
            <person name="Anderson I."/>
            <person name="Galleron N."/>
            <person name="Candelon B."/>
            <person name="Kapatral V."/>
            <person name="Bhattacharyya A."/>
            <person name="Reznik G."/>
            <person name="Mikhailova N."/>
            <person name="Lapidus A."/>
            <person name="Chu L."/>
            <person name="Mazur M."/>
            <person name="Goltsman E."/>
            <person name="Larsen N."/>
            <person name="D'Souza M."/>
            <person name="Walunas T."/>
            <person name="Grechkin Y."/>
            <person name="Pusch G."/>
            <person name="Haselkorn R."/>
            <person name="Fonstein M."/>
            <person name="Ehrlich S.D."/>
            <person name="Overbeek R."/>
            <person name="Kyrpides N.C."/>
        </authorList>
    </citation>
    <scope>NUCLEOTIDE SEQUENCE [LARGE SCALE GENOMIC DNA]</scope>
    <source>
        <strain>ATCC 14579 / DSM 31 / CCUG 7414 / JCM 2152 / NBRC 15305 / NCIMB 9373 / NCTC 2599 / NRRL B-3711</strain>
    </source>
</reference>
<gene>
    <name evidence="1" type="primary">dabA</name>
    <name type="ordered locus">BC_3141</name>
</gene>
<protein>
    <recommendedName>
        <fullName evidence="1">Probable inorganic carbon transporter subunit DabA</fullName>
    </recommendedName>
</protein>
<keyword id="KW-1003">Cell membrane</keyword>
<keyword id="KW-0472">Membrane</keyword>
<keyword id="KW-0479">Metal-binding</keyword>
<keyword id="KW-1185">Reference proteome</keyword>
<keyword id="KW-0813">Transport</keyword>
<keyword id="KW-0862">Zinc</keyword>
<accession>Q81BL2</accession>
<dbReference type="EMBL" id="AE016877">
    <property type="protein sequence ID" value="AAP10083.1"/>
    <property type="molecule type" value="Genomic_DNA"/>
</dbReference>
<dbReference type="RefSeq" id="NP_832882.1">
    <property type="nucleotide sequence ID" value="NC_004722.1"/>
</dbReference>
<dbReference type="SMR" id="Q81BL2"/>
<dbReference type="STRING" id="226900.BC_3141"/>
<dbReference type="KEGG" id="bce:BC3141"/>
<dbReference type="PATRIC" id="fig|226900.8.peg.3225"/>
<dbReference type="HOGENOM" id="CLU_009885_0_0_9"/>
<dbReference type="Proteomes" id="UP000001417">
    <property type="component" value="Chromosome"/>
</dbReference>
<dbReference type="GO" id="GO:0005886">
    <property type="term" value="C:plasma membrane"/>
    <property type="evidence" value="ECO:0007669"/>
    <property type="project" value="UniProtKB-SubCell"/>
</dbReference>
<dbReference type="GO" id="GO:0008270">
    <property type="term" value="F:zinc ion binding"/>
    <property type="evidence" value="ECO:0007669"/>
    <property type="project" value="UniProtKB-UniRule"/>
</dbReference>
<dbReference type="HAMAP" id="MF_01871">
    <property type="entry name" value="DabA"/>
    <property type="match status" value="1"/>
</dbReference>
<dbReference type="InterPro" id="IPR018752">
    <property type="entry name" value="DabA"/>
</dbReference>
<dbReference type="PANTHER" id="PTHR38344:SF1">
    <property type="entry name" value="INORGANIC CARBON TRANSPORTER SUBUNIT DABA-RELATED"/>
    <property type="match status" value="1"/>
</dbReference>
<dbReference type="PANTHER" id="PTHR38344">
    <property type="entry name" value="UPF0753 PROTEIN AQ_863"/>
    <property type="match status" value="1"/>
</dbReference>
<dbReference type="Pfam" id="PF10070">
    <property type="entry name" value="DabA"/>
    <property type="match status" value="1"/>
</dbReference>